<comment type="function">
    <text evidence="2">RNA-binding component of the eukaryotic translation initiation factor 3 (eIF-3) complex, which is involved in protein synthesis of a specialized repertoire of mRNAs and, together with other initiation factors, stimulates binding of mRNA and methionyl-tRNAi to the 40S ribosome. The eIF-3 complex specifically targets and initiates translation of a subset of mRNAs involved in cell proliferation. This subunit can bind 18S rRNA.</text>
</comment>
<comment type="subunit">
    <text evidence="2">Component of the eukaryotic translation initiation factor 3 (eIF-3) complex. The eIF-3 complex interacts with pix.</text>
</comment>
<comment type="subcellular location">
    <subcellularLocation>
        <location evidence="2">Cytoplasm</location>
    </subcellularLocation>
</comment>
<comment type="similarity">
    <text evidence="2">Belongs to the eIF-3 subunit G family.</text>
</comment>
<evidence type="ECO:0000250" key="1">
    <source>
        <dbReference type="UniProtKB" id="Q9VDM6"/>
    </source>
</evidence>
<evidence type="ECO:0000255" key="2">
    <source>
        <dbReference type="HAMAP-Rule" id="MF_03006"/>
    </source>
</evidence>
<evidence type="ECO:0000256" key="3">
    <source>
        <dbReference type="SAM" id="MobiDB-lite"/>
    </source>
</evidence>
<keyword id="KW-0963">Cytoplasm</keyword>
<keyword id="KW-0396">Initiation factor</keyword>
<keyword id="KW-0648">Protein biosynthesis</keyword>
<keyword id="KW-0694">RNA-binding</keyword>
<gene>
    <name evidence="1" type="primary">eIF3g2</name>
    <name evidence="2" type="synonym">eIF3-S4</name>
    <name evidence="1" type="synonym">eIF3gb</name>
    <name type="ORF">GG23911</name>
</gene>
<reference key="1">
    <citation type="journal article" date="2007" name="Nature">
        <title>Evolution of genes and genomes on the Drosophila phylogeny.</title>
        <authorList>
            <consortium name="Drosophila 12 genomes consortium"/>
        </authorList>
    </citation>
    <scope>NUCLEOTIDE SEQUENCE [LARGE SCALE GENOMIC DNA]</scope>
    <source>
        <strain>Tucson 14021-0224.01</strain>
    </source>
</reference>
<feature type="chain" id="PRO_0000365410" description="Eukaryotic translation initiation factor 3 subunit G-2">
    <location>
        <begin position="1"/>
        <end position="273"/>
    </location>
</feature>
<feature type="domain" description="RRM" evidence="2">
    <location>
        <begin position="193"/>
        <end position="271"/>
    </location>
</feature>
<feature type="region of interest" description="Disordered" evidence="3">
    <location>
        <begin position="168"/>
        <end position="192"/>
    </location>
</feature>
<feature type="compositionally biased region" description="Gly residues" evidence="3">
    <location>
        <begin position="173"/>
        <end position="183"/>
    </location>
</feature>
<protein>
    <recommendedName>
        <fullName evidence="1">Eukaryotic translation initiation factor 3 subunit G-2</fullName>
    </recommendedName>
    <alternativeName>
        <fullName evidence="2">Eukaryotic translation initiation factor 3 RNA-binding subunit 2</fullName>
        <shortName evidence="2">eIF-3 RNA-binding subunit 2</shortName>
    </alternativeName>
    <alternativeName>
        <fullName evidence="2">Eukaryotic translation initiation factor 3 subunit 4-2</fullName>
    </alternativeName>
</protein>
<organism>
    <name type="scientific">Drosophila erecta</name>
    <name type="common">Fruit fly</name>
    <dbReference type="NCBI Taxonomy" id="7220"/>
    <lineage>
        <taxon>Eukaryota</taxon>
        <taxon>Metazoa</taxon>
        <taxon>Ecdysozoa</taxon>
        <taxon>Arthropoda</taxon>
        <taxon>Hexapoda</taxon>
        <taxon>Insecta</taxon>
        <taxon>Pterygota</taxon>
        <taxon>Neoptera</taxon>
        <taxon>Endopterygota</taxon>
        <taxon>Diptera</taxon>
        <taxon>Brachycera</taxon>
        <taxon>Muscomorpha</taxon>
        <taxon>Ephydroidea</taxon>
        <taxon>Drosophilidae</taxon>
        <taxon>Drosophila</taxon>
        <taxon>Sophophora</taxon>
    </lineage>
</organism>
<sequence>MKAFNTSWADEVEADYVDGLPPSNEYIEGDYKYVTEYKFNDDGKKVKVVRTFKIEKQIVPKAVARRRSWVKFGDSLLDKPGPNSQTTMASEEIFMQFIGSKEFDQTHETQLDPGKNIAKCRICNGEHWSVNCPYKGTSMDSKTMMETKANAAAAAAVSDPSKMGKYVPPFMKDGGGGSGGKNWGRGRDRDDSSAVRISNLSESMTEADLEELVKKIGPHTKMYLAREKNTGLCKGFAYVHFKFRQDAAAAIEVLNGHGYDHLILCVEWSKPQP</sequence>
<proteinExistence type="inferred from homology"/>
<dbReference type="EMBL" id="CH954181">
    <property type="protein sequence ID" value="EDV48390.1"/>
    <property type="molecule type" value="Genomic_DNA"/>
</dbReference>
<dbReference type="SMR" id="B3NYY7"/>
<dbReference type="EnsemblMetazoa" id="FBtr0143965">
    <property type="protein sequence ID" value="FBpp0142457"/>
    <property type="gene ID" value="FBgn0116050"/>
</dbReference>
<dbReference type="EnsemblMetazoa" id="XM_001979396.3">
    <property type="protein sequence ID" value="XP_001979432.1"/>
    <property type="gene ID" value="LOC6553721"/>
</dbReference>
<dbReference type="GeneID" id="6553721"/>
<dbReference type="KEGG" id="der:6553721"/>
<dbReference type="CTD" id="42422"/>
<dbReference type="eggNOG" id="KOG0122">
    <property type="taxonomic scope" value="Eukaryota"/>
</dbReference>
<dbReference type="HOGENOM" id="CLU_034595_0_0_1"/>
<dbReference type="OMA" id="IVNPYPN"/>
<dbReference type="OrthoDB" id="639027at2759"/>
<dbReference type="PhylomeDB" id="B3NYY7"/>
<dbReference type="Proteomes" id="UP000008711">
    <property type="component" value="Unassembled WGS sequence"/>
</dbReference>
<dbReference type="GO" id="GO:0016282">
    <property type="term" value="C:eukaryotic 43S preinitiation complex"/>
    <property type="evidence" value="ECO:0007669"/>
    <property type="project" value="UniProtKB-UniRule"/>
</dbReference>
<dbReference type="GO" id="GO:0033290">
    <property type="term" value="C:eukaryotic 48S preinitiation complex"/>
    <property type="evidence" value="ECO:0007669"/>
    <property type="project" value="UniProtKB-UniRule"/>
</dbReference>
<dbReference type="GO" id="GO:0005852">
    <property type="term" value="C:eukaryotic translation initiation factor 3 complex"/>
    <property type="evidence" value="ECO:0007669"/>
    <property type="project" value="UniProtKB-UniRule"/>
</dbReference>
<dbReference type="GO" id="GO:0003723">
    <property type="term" value="F:RNA binding"/>
    <property type="evidence" value="ECO:0007669"/>
    <property type="project" value="UniProtKB-UniRule"/>
</dbReference>
<dbReference type="GO" id="GO:0003743">
    <property type="term" value="F:translation initiation factor activity"/>
    <property type="evidence" value="ECO:0007669"/>
    <property type="project" value="UniProtKB-UniRule"/>
</dbReference>
<dbReference type="GO" id="GO:0001732">
    <property type="term" value="P:formation of cytoplasmic translation initiation complex"/>
    <property type="evidence" value="ECO:0007669"/>
    <property type="project" value="UniProtKB-UniRule"/>
</dbReference>
<dbReference type="CDD" id="cd12933">
    <property type="entry name" value="eIF3G"/>
    <property type="match status" value="1"/>
</dbReference>
<dbReference type="CDD" id="cd12408">
    <property type="entry name" value="RRM_eIF3G_like"/>
    <property type="match status" value="1"/>
</dbReference>
<dbReference type="FunFam" id="3.30.70.330:FF:000828">
    <property type="entry name" value="Eukaryotic translation initiation factor 3 subunit G"/>
    <property type="match status" value="1"/>
</dbReference>
<dbReference type="Gene3D" id="3.30.70.330">
    <property type="match status" value="1"/>
</dbReference>
<dbReference type="HAMAP" id="MF_03006">
    <property type="entry name" value="eIF3g"/>
    <property type="match status" value="1"/>
</dbReference>
<dbReference type="InterPro" id="IPR017334">
    <property type="entry name" value="eIF3_g"/>
</dbReference>
<dbReference type="InterPro" id="IPR024675">
    <property type="entry name" value="eIF3g_N"/>
</dbReference>
<dbReference type="InterPro" id="IPR034240">
    <property type="entry name" value="eIF3G_RRM"/>
</dbReference>
<dbReference type="InterPro" id="IPR012677">
    <property type="entry name" value="Nucleotide-bd_a/b_plait_sf"/>
</dbReference>
<dbReference type="InterPro" id="IPR035979">
    <property type="entry name" value="RBD_domain_sf"/>
</dbReference>
<dbReference type="InterPro" id="IPR000504">
    <property type="entry name" value="RRM_dom"/>
</dbReference>
<dbReference type="PANTHER" id="PTHR10352">
    <property type="entry name" value="EUKARYOTIC TRANSLATION INITIATION FACTOR 3 SUBUNIT G"/>
    <property type="match status" value="1"/>
</dbReference>
<dbReference type="Pfam" id="PF12353">
    <property type="entry name" value="eIF3g"/>
    <property type="match status" value="1"/>
</dbReference>
<dbReference type="Pfam" id="PF00076">
    <property type="entry name" value="RRM_1"/>
    <property type="match status" value="1"/>
</dbReference>
<dbReference type="PIRSF" id="PIRSF037949">
    <property type="entry name" value="Transl_init_eIF-3_RNA-bind"/>
    <property type="match status" value="1"/>
</dbReference>
<dbReference type="SMART" id="SM00360">
    <property type="entry name" value="RRM"/>
    <property type="match status" value="1"/>
</dbReference>
<dbReference type="SUPFAM" id="SSF54928">
    <property type="entry name" value="RNA-binding domain, RBD"/>
    <property type="match status" value="1"/>
</dbReference>
<dbReference type="PROSITE" id="PS50102">
    <property type="entry name" value="RRM"/>
    <property type="match status" value="1"/>
</dbReference>
<accession>B3NYY7</accession>
<name>EI3G2_DROER</name>